<protein>
    <recommendedName>
        <fullName>Soluble calcium-activated nucleotidase 1</fullName>
        <shortName>SCAN-1</shortName>
        <ecNumber evidence="3">3.6.1.6</ecNumber>
    </recommendedName>
    <alternativeName>
        <fullName>Apyrase homolog</fullName>
    </alternativeName>
</protein>
<organism>
    <name type="scientific">Rattus norvegicus</name>
    <name type="common">Rat</name>
    <dbReference type="NCBI Taxonomy" id="10116"/>
    <lineage>
        <taxon>Eukaryota</taxon>
        <taxon>Metazoa</taxon>
        <taxon>Chordata</taxon>
        <taxon>Craniata</taxon>
        <taxon>Vertebrata</taxon>
        <taxon>Euteleostomi</taxon>
        <taxon>Mammalia</taxon>
        <taxon>Eutheria</taxon>
        <taxon>Euarchontoglires</taxon>
        <taxon>Glires</taxon>
        <taxon>Rodentia</taxon>
        <taxon>Myomorpha</taxon>
        <taxon>Muroidea</taxon>
        <taxon>Muridae</taxon>
        <taxon>Murinae</taxon>
        <taxon>Rattus</taxon>
    </lineage>
</organism>
<sequence length="403" mass="45659">MPIQPFDQREWNEPMHSLRISVGGLPVLASMTKATDPRFRPRWRVILTSFVGAALLWLLYSHHQTPVSGRPPIHNAHNWRLRQERISQYNDTYPLSPPQRTPGGIRYRIAVIADLDTGSKAQEENTWFSYLKKGYLTLSDSGDRVSVEWDKDRGVLESHLAEKGRGMELSDLIVFNGKLYSVDDRTGVIYQIEGTKAVPWVILSDGDGAVEKGFKAEWLAVKDEHLYVGGLGKEWTTTTGEVVNENPEWVKVVGHRGSVEHENWVSSYNALRAAAGIQPPGYLIHESACWSDTLQRWFFLPRRASHERYSEREDERKGSNLLLSAAQDFRDISVRQVGALVPTHGFSSFKFIPNTDDQIIVALKSEEDNGRIATYVMAFTLDGRFLLPETKIGSVKYEGIEFI</sequence>
<proteinExistence type="evidence at protein level"/>
<gene>
    <name type="primary">Cant1</name>
    <name type="synonym">Srapy</name>
</gene>
<dbReference type="EC" id="3.6.1.6" evidence="3"/>
<dbReference type="EMBL" id="AJ312207">
    <property type="protein sequence ID" value="CAC85467.1"/>
    <property type="molecule type" value="mRNA"/>
</dbReference>
<dbReference type="EMBL" id="BC097279">
    <property type="protein sequence ID" value="AAH97279.1"/>
    <property type="molecule type" value="mRNA"/>
</dbReference>
<dbReference type="RefSeq" id="NP_653355.1">
    <property type="nucleotide sequence ID" value="NM_144754.2"/>
</dbReference>
<dbReference type="RefSeq" id="XP_006247851.1">
    <property type="nucleotide sequence ID" value="XM_006247789.5"/>
</dbReference>
<dbReference type="RefSeq" id="XP_006247852.1">
    <property type="nucleotide sequence ID" value="XM_006247790.3"/>
</dbReference>
<dbReference type="SMR" id="Q8K4Y7"/>
<dbReference type="FunCoup" id="Q8K4Y7">
    <property type="interactions" value="1877"/>
</dbReference>
<dbReference type="STRING" id="10116.ENSRNOP00000059931"/>
<dbReference type="GlyCosmos" id="Q8K4Y7">
    <property type="glycosylation" value="1 site, No reported glycans"/>
</dbReference>
<dbReference type="GlyGen" id="Q8K4Y7">
    <property type="glycosylation" value="1 site"/>
</dbReference>
<dbReference type="PhosphoSitePlus" id="Q8K4Y7"/>
<dbReference type="PaxDb" id="10116-ENSRNOP00000059931"/>
<dbReference type="Ensembl" id="ENSRNOT00000066303.3">
    <property type="protein sequence ID" value="ENSRNOP00000059931.2"/>
    <property type="gene ID" value="ENSRNOG00000003239.7"/>
</dbReference>
<dbReference type="GeneID" id="246272"/>
<dbReference type="KEGG" id="rno:246272"/>
<dbReference type="UCSC" id="RGD:628743">
    <property type="organism name" value="rat"/>
</dbReference>
<dbReference type="AGR" id="RGD:628743"/>
<dbReference type="CTD" id="124583"/>
<dbReference type="RGD" id="628743">
    <property type="gene designation" value="Cant1"/>
</dbReference>
<dbReference type="eggNOG" id="KOG4494">
    <property type="taxonomic scope" value="Eukaryota"/>
</dbReference>
<dbReference type="GeneTree" id="ENSGT00390000012872"/>
<dbReference type="HOGENOM" id="CLU_047493_0_0_1"/>
<dbReference type="InParanoid" id="Q8K4Y7"/>
<dbReference type="OMA" id="ATNLMLC"/>
<dbReference type="OrthoDB" id="25028at2759"/>
<dbReference type="BRENDA" id="3.6.1.6">
    <property type="organism ID" value="5301"/>
</dbReference>
<dbReference type="Reactome" id="R-RNO-6798695">
    <property type="pathway name" value="Neutrophil degranulation"/>
</dbReference>
<dbReference type="SABIO-RK" id="Q8K4Y7"/>
<dbReference type="PRO" id="PR:Q8K4Y7"/>
<dbReference type="Proteomes" id="UP000002494">
    <property type="component" value="Chromosome 10"/>
</dbReference>
<dbReference type="Bgee" id="ENSRNOG00000003239">
    <property type="expression patterns" value="Expressed in colon and 19 other cell types or tissues"/>
</dbReference>
<dbReference type="GO" id="GO:0005789">
    <property type="term" value="C:endoplasmic reticulum membrane"/>
    <property type="evidence" value="ECO:0000314"/>
    <property type="project" value="RGD"/>
</dbReference>
<dbReference type="GO" id="GO:0032580">
    <property type="term" value="C:Golgi cisterna membrane"/>
    <property type="evidence" value="ECO:0007669"/>
    <property type="project" value="UniProtKB-SubCell"/>
</dbReference>
<dbReference type="GO" id="GO:0016020">
    <property type="term" value="C:membrane"/>
    <property type="evidence" value="ECO:0000266"/>
    <property type="project" value="RGD"/>
</dbReference>
<dbReference type="GO" id="GO:0043262">
    <property type="term" value="F:ADP phosphatase activity"/>
    <property type="evidence" value="ECO:0000266"/>
    <property type="project" value="RGD"/>
</dbReference>
<dbReference type="GO" id="GO:0005509">
    <property type="term" value="F:calcium ion binding"/>
    <property type="evidence" value="ECO:0000266"/>
    <property type="project" value="RGD"/>
</dbReference>
<dbReference type="GO" id="GO:0004382">
    <property type="term" value="F:GDP phosphatase activity"/>
    <property type="evidence" value="ECO:0000266"/>
    <property type="project" value="RGD"/>
</dbReference>
<dbReference type="GO" id="GO:0042803">
    <property type="term" value="F:protein homodimerization activity"/>
    <property type="evidence" value="ECO:0000266"/>
    <property type="project" value="RGD"/>
</dbReference>
<dbReference type="GO" id="GO:0045134">
    <property type="term" value="F:UDP phosphatase activity"/>
    <property type="evidence" value="ECO:0000318"/>
    <property type="project" value="GO_Central"/>
</dbReference>
<dbReference type="GO" id="GO:0030166">
    <property type="term" value="P:proteoglycan biosynthetic process"/>
    <property type="evidence" value="ECO:0000250"/>
    <property type="project" value="UniProtKB"/>
</dbReference>
<dbReference type="FunFam" id="2.120.10.100:FF:000001">
    <property type="entry name" value="Soluble calcium-activated nucleotidase 1"/>
    <property type="match status" value="1"/>
</dbReference>
<dbReference type="Gene3D" id="2.120.10.100">
    <property type="entry name" value="Apyrase"/>
    <property type="match status" value="1"/>
</dbReference>
<dbReference type="InterPro" id="IPR009283">
    <property type="entry name" value="Apyrase"/>
</dbReference>
<dbReference type="InterPro" id="IPR036258">
    <property type="entry name" value="Apyrase_sf"/>
</dbReference>
<dbReference type="PANTHER" id="PTHR13023">
    <property type="entry name" value="APYRASE"/>
    <property type="match status" value="1"/>
</dbReference>
<dbReference type="PANTHER" id="PTHR13023:SF3">
    <property type="entry name" value="SOLUBLE CALCIUM-ACTIVATED NUCLEOTIDASE 1"/>
    <property type="match status" value="1"/>
</dbReference>
<dbReference type="Pfam" id="PF06079">
    <property type="entry name" value="Apyrase"/>
    <property type="match status" value="1"/>
</dbReference>
<dbReference type="SUPFAM" id="SSF101887">
    <property type="entry name" value="Apyrase"/>
    <property type="match status" value="1"/>
</dbReference>
<reference key="1">
    <citation type="journal article" date="2002" name="J. Biol. Chem.">
        <title>Cloning, expression, and functional characterization of a Ca2+-dependent endoplasmic reticulum nucleoside diphosphatase.</title>
        <authorList>
            <person name="Failer B.U."/>
            <person name="Braun N."/>
            <person name="Zimmermann H."/>
        </authorList>
    </citation>
    <scope>NUCLEOTIDE SEQUENCE [MRNA]</scope>
    <scope>FUNCTION</scope>
    <scope>CATALYTIC ACTIVITY</scope>
    <scope>COFACTOR</scope>
    <scope>BIOPHYSICOCHEMICAL PROPERTIES</scope>
    <scope>SUBCELLULAR LOCATION</scope>
    <scope>TISSUE SPECIFICITY</scope>
    <source>
        <strain>Sprague-Dawley</strain>
        <tissue>Brain</tissue>
    </source>
</reference>
<reference key="2">
    <citation type="journal article" date="2004" name="Genome Res.">
        <title>The status, quality, and expansion of the NIH full-length cDNA project: the Mammalian Gene Collection (MGC).</title>
        <authorList>
            <consortium name="The MGC Project Team"/>
        </authorList>
    </citation>
    <scope>NUCLEOTIDE SEQUENCE [LARGE SCALE MRNA]</scope>
    <source>
        <tissue>Placenta</tissue>
    </source>
</reference>
<feature type="chain" id="PRO_0000209927" description="Soluble calcium-activated nucleotidase 1">
    <location>
        <begin position="1"/>
        <end position="403"/>
    </location>
</feature>
<feature type="topological domain" description="Cytoplasmic" evidence="2">
    <location>
        <begin position="1"/>
        <end position="44"/>
    </location>
</feature>
<feature type="transmembrane region" description="Helical; Signal-anchor for type II membrane protein" evidence="2">
    <location>
        <begin position="45"/>
        <end position="61"/>
    </location>
</feature>
<feature type="topological domain" description="Lumenal" evidence="2">
    <location>
        <begin position="62"/>
        <end position="403"/>
    </location>
</feature>
<feature type="binding site" evidence="1">
    <location>
        <position position="170"/>
    </location>
    <ligand>
        <name>Ca(2+)</name>
        <dbReference type="ChEBI" id="CHEBI:29108"/>
    </ligand>
</feature>
<feature type="binding site" evidence="1">
    <location>
        <position position="171"/>
    </location>
    <ligand>
        <name>Ca(2+)</name>
        <dbReference type="ChEBI" id="CHEBI:29108"/>
    </ligand>
</feature>
<feature type="binding site" evidence="1">
    <location>
        <position position="217"/>
    </location>
    <ligand>
        <name>Ca(2+)</name>
        <dbReference type="ChEBI" id="CHEBI:29108"/>
    </ligand>
</feature>
<feature type="binding site" evidence="1">
    <location>
        <position position="286"/>
    </location>
    <ligand>
        <name>Ca(2+)</name>
        <dbReference type="ChEBI" id="CHEBI:29108"/>
    </ligand>
</feature>
<feature type="binding site" evidence="1">
    <location>
        <position position="347"/>
    </location>
    <ligand>
        <name>Ca(2+)</name>
        <dbReference type="ChEBI" id="CHEBI:29108"/>
    </ligand>
</feature>
<feature type="binding site" evidence="1">
    <location>
        <position position="398"/>
    </location>
    <ligand>
        <name>Ca(2+)</name>
        <dbReference type="ChEBI" id="CHEBI:29108"/>
    </ligand>
</feature>
<feature type="site" description="Important for dimer formation" evidence="1">
    <location>
        <position position="162"/>
    </location>
</feature>
<feature type="site" description="Important for dimer formation" evidence="1">
    <location>
        <position position="202"/>
    </location>
</feature>
<feature type="site" description="Important for dimer formation" evidence="1">
    <location>
        <position position="204"/>
    </location>
</feature>
<feature type="site" description="Important for dimer formation" evidence="1">
    <location>
        <position position="258"/>
    </location>
</feature>
<feature type="glycosylation site" description="N-linked (GlcNAc...) asparagine" evidence="2">
    <location>
        <position position="90"/>
    </location>
</feature>
<accession>Q8K4Y7</accession>
<accession>Q4V8N9</accession>
<keyword id="KW-0106">Calcium</keyword>
<keyword id="KW-0256">Endoplasmic reticulum</keyword>
<keyword id="KW-0325">Glycoprotein</keyword>
<keyword id="KW-0333">Golgi apparatus</keyword>
<keyword id="KW-0378">Hydrolase</keyword>
<keyword id="KW-0472">Membrane</keyword>
<keyword id="KW-0479">Metal-binding</keyword>
<keyword id="KW-1185">Reference proteome</keyword>
<keyword id="KW-0735">Signal-anchor</keyword>
<keyword id="KW-0812">Transmembrane</keyword>
<keyword id="KW-1133">Transmembrane helix</keyword>
<comment type="function">
    <text evidence="1 3">Calcium-dependent nucleotidase with a preference for UDP. The order of activity with different substrates is UDP &gt; GDP &gt; IDP &gt;&gt; UTP &gt; CDP = GTP = ITP. Has very low activity towards ADP and even lower activity towards ATP. Does not hydrolyze AMP and GMP (PubMed:12167635). Involved in proteoglycan synthesis (By similarity).</text>
</comment>
<comment type="catalytic activity">
    <reaction evidence="3">
        <text>a ribonucleoside 5'-diphosphate + H2O = a ribonucleoside 5'-phosphate + phosphate + H(+)</text>
        <dbReference type="Rhea" id="RHEA:36799"/>
        <dbReference type="ChEBI" id="CHEBI:15377"/>
        <dbReference type="ChEBI" id="CHEBI:15378"/>
        <dbReference type="ChEBI" id="CHEBI:43474"/>
        <dbReference type="ChEBI" id="CHEBI:57930"/>
        <dbReference type="ChEBI" id="CHEBI:58043"/>
        <dbReference type="EC" id="3.6.1.6"/>
    </reaction>
</comment>
<comment type="cofactor">
    <cofactor evidence="3">
        <name>Ca(2+)</name>
        <dbReference type="ChEBI" id="CHEBI:29108"/>
    </cofactor>
</comment>
<comment type="biophysicochemical properties">
    <kinetics>
        <KM evidence="3">216 uM for UDP</KM>
    </kinetics>
</comment>
<comment type="subunit">
    <text evidence="1">Monomer. Homodimer; dimerization is Ca(2+)-dependent.</text>
</comment>
<comment type="subcellular location">
    <subcellularLocation>
        <location evidence="3">Endoplasmic reticulum membrane</location>
        <topology evidence="3">Single-pass type II membrane protein</topology>
    </subcellularLocation>
    <subcellularLocation>
        <location evidence="3">Golgi apparatus</location>
        <location evidence="3">Golgi stack membrane</location>
        <topology evidence="3">Single-pass type II membrane protein</topology>
    </subcellularLocation>
    <text>Processed form: Secreted.</text>
</comment>
<comment type="tissue specificity">
    <text evidence="3">Detected in intestine, thymus, heart, lung, spleen, kidney, liver, testis, skeletal muscle and brain.</text>
</comment>
<comment type="similarity">
    <text evidence="4">Belongs to the apyrase family.</text>
</comment>
<name>CANT1_RAT</name>
<evidence type="ECO:0000250" key="1">
    <source>
        <dbReference type="UniProtKB" id="Q8WVQ1"/>
    </source>
</evidence>
<evidence type="ECO:0000255" key="2"/>
<evidence type="ECO:0000269" key="3">
    <source>
    </source>
</evidence>
<evidence type="ECO:0000305" key="4"/>